<sequence length="583" mass="66690">MSFRLFTRTSQRLPRLNWVSPIRRYAKQPQYDEAELFAENINHGAYKAKKRPSDEHFQWPEKSPDQITKESELQWERMAKLSAVGQGILILVVVGGLGTAYLRWPELKSWWLIKMNGGRINATQEQSGQDSLEKLIRQKAKNLLREIPQVPAFQLGIDHPGVYIWGRCHSKDSLFPVRVPNLDGRKFRDILLAPSDDFNTNFAIDEKGDLISWDDLGQTKTILPDQDLTSMKYSSHFLYALNKKGEILVIPIRTPDLIASQVSSRRSKLLPWKTKLRYDWKLQTNQIFNGKEGEKRVVQFDAGSHHLVLLSNLGKAYCCATGNDQKQAQVSKGQFGIPTFSQFDEFPPNNQLFEIELLNKFKHEGEDVVRKREIKKIACGSYHTLAIDKTGEIYAFGWNRFGQLALPISYNLEYVSFPRSVTHAFKPHFPGMTNWKCVDIHCDDETSFVTIRKPGSTSDHHYFAFGNGLFGELGNNTFKNSQCDPIKIKSDDKKLTNWSCGSHCVFTETEQENEVIAWGNNDHGQLGIGKKTMKCAKPMNIPEVLKPGQDTTDLDSIYNSKLHLKKEQRVVTNGNKSCLYWRV</sequence>
<name>FMP25_YEAST</name>
<organism>
    <name type="scientific">Saccharomyces cerevisiae (strain ATCC 204508 / S288c)</name>
    <name type="common">Baker's yeast</name>
    <dbReference type="NCBI Taxonomy" id="559292"/>
    <lineage>
        <taxon>Eukaryota</taxon>
        <taxon>Fungi</taxon>
        <taxon>Dikarya</taxon>
        <taxon>Ascomycota</taxon>
        <taxon>Saccharomycotina</taxon>
        <taxon>Saccharomycetes</taxon>
        <taxon>Saccharomycetales</taxon>
        <taxon>Saccharomycetaceae</taxon>
        <taxon>Saccharomyces</taxon>
    </lineage>
</organism>
<dbReference type="EMBL" id="Z73249">
    <property type="protein sequence ID" value="CAA97635.1"/>
    <property type="molecule type" value="Genomic_DNA"/>
</dbReference>
<dbReference type="EMBL" id="Z73250">
    <property type="protein sequence ID" value="CAA97637.1"/>
    <property type="molecule type" value="Genomic_DNA"/>
</dbReference>
<dbReference type="EMBL" id="U53880">
    <property type="protein sequence ID" value="AAB67597.1"/>
    <property type="molecule type" value="Genomic_DNA"/>
</dbReference>
<dbReference type="EMBL" id="AY723844">
    <property type="protein sequence ID" value="AAU09761.1"/>
    <property type="molecule type" value="Genomic_DNA"/>
</dbReference>
<dbReference type="EMBL" id="BK006945">
    <property type="protein sequence ID" value="DAA09393.1"/>
    <property type="molecule type" value="Genomic_DNA"/>
</dbReference>
<dbReference type="PIR" id="S64909">
    <property type="entry name" value="S64909"/>
</dbReference>
<dbReference type="RefSeq" id="NP_013178.1">
    <property type="nucleotide sequence ID" value="NM_001181964.1"/>
</dbReference>
<dbReference type="SMR" id="Q08023"/>
<dbReference type="BioGRID" id="31350">
    <property type="interactions" value="67"/>
</dbReference>
<dbReference type="DIP" id="DIP-4474N"/>
<dbReference type="FunCoup" id="Q08023">
    <property type="interactions" value="40"/>
</dbReference>
<dbReference type="IntAct" id="Q08023">
    <property type="interactions" value="4"/>
</dbReference>
<dbReference type="MINT" id="Q08023"/>
<dbReference type="STRING" id="4932.YLR077W"/>
<dbReference type="PaxDb" id="4932-YLR077W"/>
<dbReference type="PeptideAtlas" id="Q08023"/>
<dbReference type="EnsemblFungi" id="YLR077W_mRNA">
    <property type="protein sequence ID" value="YLR077W"/>
    <property type="gene ID" value="YLR077W"/>
</dbReference>
<dbReference type="GeneID" id="850766"/>
<dbReference type="KEGG" id="sce:YLR077W"/>
<dbReference type="AGR" id="SGD:S000004067"/>
<dbReference type="SGD" id="S000004067">
    <property type="gene designation" value="FMP25"/>
</dbReference>
<dbReference type="VEuPathDB" id="FungiDB:YLR077W"/>
<dbReference type="eggNOG" id="KOG1426">
    <property type="taxonomic scope" value="Eukaryota"/>
</dbReference>
<dbReference type="GeneTree" id="ENSGT00940000174956"/>
<dbReference type="HOGENOM" id="CLU_028610_1_0_1"/>
<dbReference type="InParanoid" id="Q08023"/>
<dbReference type="OMA" id="YDQPHEI"/>
<dbReference type="OrthoDB" id="10256179at2759"/>
<dbReference type="BioCyc" id="YEAST:G3O-32228-MONOMER"/>
<dbReference type="BioGRID-ORCS" id="850766">
    <property type="hits" value="9 hits in 10 CRISPR screens"/>
</dbReference>
<dbReference type="PRO" id="PR:Q08023"/>
<dbReference type="Proteomes" id="UP000002311">
    <property type="component" value="Chromosome XII"/>
</dbReference>
<dbReference type="RNAct" id="Q08023">
    <property type="molecule type" value="protein"/>
</dbReference>
<dbReference type="GO" id="GO:0005743">
    <property type="term" value="C:mitochondrial inner membrane"/>
    <property type="evidence" value="ECO:0000314"/>
    <property type="project" value="SGD"/>
</dbReference>
<dbReference type="GO" id="GO:0005739">
    <property type="term" value="C:mitochondrion"/>
    <property type="evidence" value="ECO:0007005"/>
    <property type="project" value="SGD"/>
</dbReference>
<dbReference type="GO" id="GO:0034551">
    <property type="term" value="P:mitochondrial respiratory chain complex III assembly"/>
    <property type="evidence" value="ECO:0000315"/>
    <property type="project" value="SGD"/>
</dbReference>
<dbReference type="Gene3D" id="2.130.10.30">
    <property type="entry name" value="Regulator of chromosome condensation 1/beta-lactamase-inhibitor protein II"/>
    <property type="match status" value="1"/>
</dbReference>
<dbReference type="InterPro" id="IPR053245">
    <property type="entry name" value="MitoProcess-Associated"/>
</dbReference>
<dbReference type="InterPro" id="IPR009091">
    <property type="entry name" value="RCC1/BLIP-II"/>
</dbReference>
<dbReference type="InterPro" id="IPR000408">
    <property type="entry name" value="Reg_chr_condens"/>
</dbReference>
<dbReference type="PANTHER" id="PTHR47563">
    <property type="entry name" value="PROTEIN FMP25, MITOCHONDRIAL"/>
    <property type="match status" value="1"/>
</dbReference>
<dbReference type="PANTHER" id="PTHR47563:SF1">
    <property type="entry name" value="PROTEIN FMP25, MITOCHONDRIAL"/>
    <property type="match status" value="1"/>
</dbReference>
<dbReference type="Pfam" id="PF00415">
    <property type="entry name" value="RCC1"/>
    <property type="match status" value="1"/>
</dbReference>
<dbReference type="Pfam" id="PF13540">
    <property type="entry name" value="RCC1_2"/>
    <property type="match status" value="1"/>
</dbReference>
<dbReference type="SUPFAM" id="SSF50985">
    <property type="entry name" value="RCC1/BLIP-II"/>
    <property type="match status" value="1"/>
</dbReference>
<dbReference type="PROSITE" id="PS00626">
    <property type="entry name" value="RCC1_2"/>
    <property type="match status" value="1"/>
</dbReference>
<comment type="subcellular location">
    <subcellularLocation>
        <location evidence="2">Mitochondrion membrane</location>
        <topology evidence="2">Single-pass membrane protein</topology>
    </subcellularLocation>
</comment>
<gene>
    <name type="primary">FMP25</name>
    <name type="ordered locus">YLR077W</name>
</gene>
<evidence type="ECO:0000255" key="1"/>
<evidence type="ECO:0000305" key="2"/>
<reference key="1">
    <citation type="journal article" date="1997" name="Nature">
        <title>The nucleotide sequence of Saccharomyces cerevisiae chromosome XII.</title>
        <authorList>
            <person name="Johnston M."/>
            <person name="Hillier L.W."/>
            <person name="Riles L."/>
            <person name="Albermann K."/>
            <person name="Andre B."/>
            <person name="Ansorge W."/>
            <person name="Benes V."/>
            <person name="Brueckner M."/>
            <person name="Delius H."/>
            <person name="Dubois E."/>
            <person name="Duesterhoeft A."/>
            <person name="Entian K.-D."/>
            <person name="Floeth M."/>
            <person name="Goffeau A."/>
            <person name="Hebling U."/>
            <person name="Heumann K."/>
            <person name="Heuss-Neitzel D."/>
            <person name="Hilbert H."/>
            <person name="Hilger F."/>
            <person name="Kleine K."/>
            <person name="Koetter P."/>
            <person name="Louis E.J."/>
            <person name="Messenguy F."/>
            <person name="Mewes H.-W."/>
            <person name="Miosga T."/>
            <person name="Moestl D."/>
            <person name="Mueller-Auer S."/>
            <person name="Nentwich U."/>
            <person name="Obermaier B."/>
            <person name="Piravandi E."/>
            <person name="Pohl T.M."/>
            <person name="Portetelle D."/>
            <person name="Purnelle B."/>
            <person name="Rechmann S."/>
            <person name="Rieger M."/>
            <person name="Rinke M."/>
            <person name="Rose M."/>
            <person name="Scharfe M."/>
            <person name="Scherens B."/>
            <person name="Scholler P."/>
            <person name="Schwager C."/>
            <person name="Schwarz S."/>
            <person name="Underwood A.P."/>
            <person name="Urrestarazu L.A."/>
            <person name="Vandenbol M."/>
            <person name="Verhasselt P."/>
            <person name="Vierendeels F."/>
            <person name="Voet M."/>
            <person name="Volckaert G."/>
            <person name="Voss H."/>
            <person name="Wambutt R."/>
            <person name="Wedler E."/>
            <person name="Wedler H."/>
            <person name="Zimmermann F.K."/>
            <person name="Zollner A."/>
            <person name="Hani J."/>
            <person name="Hoheisel J.D."/>
        </authorList>
    </citation>
    <scope>NUCLEOTIDE SEQUENCE [LARGE SCALE GENOMIC DNA]</scope>
    <source>
        <strain>ATCC 204508 / S288c</strain>
    </source>
</reference>
<reference key="2">
    <citation type="journal article" date="2014" name="G3 (Bethesda)">
        <title>The reference genome sequence of Saccharomyces cerevisiae: Then and now.</title>
        <authorList>
            <person name="Engel S.R."/>
            <person name="Dietrich F.S."/>
            <person name="Fisk D.G."/>
            <person name="Binkley G."/>
            <person name="Balakrishnan R."/>
            <person name="Costanzo M.C."/>
            <person name="Dwight S.S."/>
            <person name="Hitz B.C."/>
            <person name="Karra K."/>
            <person name="Nash R.S."/>
            <person name="Weng S."/>
            <person name="Wong E.D."/>
            <person name="Lloyd P."/>
            <person name="Skrzypek M.S."/>
            <person name="Miyasato S.R."/>
            <person name="Simison M."/>
            <person name="Cherry J.M."/>
        </authorList>
    </citation>
    <scope>GENOME REANNOTATION</scope>
    <source>
        <strain>ATCC 204508 / S288c</strain>
    </source>
</reference>
<reference key="3">
    <citation type="journal article" date="2007" name="Genome Res.">
        <title>Approaching a complete repository of sequence-verified protein-encoding clones for Saccharomyces cerevisiae.</title>
        <authorList>
            <person name="Hu Y."/>
            <person name="Rolfs A."/>
            <person name="Bhullar B."/>
            <person name="Murthy T.V.S."/>
            <person name="Zhu C."/>
            <person name="Berger M.F."/>
            <person name="Camargo A.A."/>
            <person name="Kelley F."/>
            <person name="McCarron S."/>
            <person name="Jepson D."/>
            <person name="Richardson A."/>
            <person name="Raphael J."/>
            <person name="Moreira D."/>
            <person name="Taycher E."/>
            <person name="Zuo D."/>
            <person name="Mohr S."/>
            <person name="Kane M.F."/>
            <person name="Williamson J."/>
            <person name="Simpson A.J.G."/>
            <person name="Bulyk M.L."/>
            <person name="Harlow E."/>
            <person name="Marsischky G."/>
            <person name="Kolodner R.D."/>
            <person name="LaBaer J."/>
        </authorList>
    </citation>
    <scope>NUCLEOTIDE SEQUENCE [GENOMIC DNA]</scope>
    <source>
        <strain>ATCC 204508 / S288c</strain>
    </source>
</reference>
<reference key="4">
    <citation type="journal article" date="2003" name="Proc. Natl. Acad. Sci. U.S.A.">
        <title>The proteome of Saccharomyces cerevisiae mitochondria.</title>
        <authorList>
            <person name="Sickmann A."/>
            <person name="Reinders J."/>
            <person name="Wagner Y."/>
            <person name="Joppich C."/>
            <person name="Zahedi R.P."/>
            <person name="Meyer H.E."/>
            <person name="Schoenfisch B."/>
            <person name="Perschil I."/>
            <person name="Chacinska A."/>
            <person name="Guiard B."/>
            <person name="Rehling P."/>
            <person name="Pfanner N."/>
            <person name="Meisinger C."/>
        </authorList>
    </citation>
    <scope>SUBCELLULAR LOCATION [LARGE SCALE ANALYSIS]</scope>
    <source>
        <strain>ATCC 76625 / YPH499</strain>
    </source>
</reference>
<keyword id="KW-0472">Membrane</keyword>
<keyword id="KW-0496">Mitochondrion</keyword>
<keyword id="KW-1185">Reference proteome</keyword>
<keyword id="KW-0677">Repeat</keyword>
<keyword id="KW-0809">Transit peptide</keyword>
<keyword id="KW-0812">Transmembrane</keyword>
<keyword id="KW-1133">Transmembrane helix</keyword>
<proteinExistence type="predicted"/>
<feature type="transit peptide" description="Mitochondrion" evidence="1">
    <location>
        <begin position="1"/>
        <end position="25"/>
    </location>
</feature>
<feature type="chain" id="PRO_0000247338" description="Protein FMP25, mitochondrial">
    <location>
        <begin position="26"/>
        <end position="583"/>
    </location>
</feature>
<feature type="transmembrane region" description="Helical" evidence="1">
    <location>
        <begin position="83"/>
        <end position="105"/>
    </location>
</feature>
<feature type="repeat" description="RCC1 1">
    <location>
        <begin position="332"/>
        <end position="389"/>
    </location>
</feature>
<feature type="repeat" description="RCC1 2">
    <location>
        <begin position="390"/>
        <end position="452"/>
    </location>
</feature>
<feature type="repeat" description="RCC1 3">
    <location>
        <begin position="459"/>
        <end position="510"/>
    </location>
</feature>
<feature type="repeat" description="RCC1 4">
    <location>
        <begin position="512"/>
        <end position="569"/>
    </location>
</feature>
<feature type="sequence conflict" description="In Ref. 3; AAU09761." evidence="2" ref="3">
    <original>P</original>
    <variation>L</variation>
    <location>
        <position position="160"/>
    </location>
</feature>
<protein>
    <recommendedName>
        <fullName>Protein FMP25, mitochondrial</fullName>
    </recommendedName>
    <alternativeName>
        <fullName>Found in mitochondrial proteome protein 25</fullName>
    </alternativeName>
</protein>
<accession>Q08023</accession>
<accession>D6VY77</accession>
<accession>Q66R51</accession>
<accession>Q7LI62</accession>